<name>RL34_PYRHO</name>
<feature type="chain" id="PRO_0000131854" description="Large ribosomal subunit protein eL34">
    <location>
        <begin position="1"/>
        <end position="91"/>
    </location>
</feature>
<feature type="region of interest" description="Disordered" evidence="1">
    <location>
        <begin position="48"/>
        <end position="69"/>
    </location>
</feature>
<evidence type="ECO:0000256" key="1">
    <source>
        <dbReference type="SAM" id="MobiDB-lite"/>
    </source>
</evidence>
<evidence type="ECO:0000305" key="2"/>
<organism>
    <name type="scientific">Pyrococcus horikoshii (strain ATCC 700860 / DSM 12428 / JCM 9974 / NBRC 100139 / OT-3)</name>
    <dbReference type="NCBI Taxonomy" id="70601"/>
    <lineage>
        <taxon>Archaea</taxon>
        <taxon>Methanobacteriati</taxon>
        <taxon>Methanobacteriota</taxon>
        <taxon>Thermococci</taxon>
        <taxon>Thermococcales</taxon>
        <taxon>Thermococcaceae</taxon>
        <taxon>Pyrococcus</taxon>
    </lineage>
</organism>
<accession>O74006</accession>
<sequence length="91" mass="10914">MKPMYRSRSWRRKYVRTPGGRVVVHFERKKPKIAHCAICGRPLNGIPRGRPVEMRKLPKTKKRPERPMPYLCPRCMRRVMKEQIRSQIMKG</sequence>
<keyword id="KW-0687">Ribonucleoprotein</keyword>
<keyword id="KW-0689">Ribosomal protein</keyword>
<proteinExistence type="inferred from homology"/>
<dbReference type="EMBL" id="BA000001">
    <property type="protein sequence ID" value="BAA30367.1"/>
    <property type="status" value="ALT_INIT"/>
    <property type="molecule type" value="Genomic_DNA"/>
</dbReference>
<dbReference type="PIR" id="E71071">
    <property type="entry name" value="E71071"/>
</dbReference>
<dbReference type="RefSeq" id="WP_048053346.1">
    <property type="nucleotide sequence ID" value="NC_000961.1"/>
</dbReference>
<dbReference type="SMR" id="O74006"/>
<dbReference type="STRING" id="70601.gene:9378229"/>
<dbReference type="EnsemblBacteria" id="BAA30367">
    <property type="protein sequence ID" value="BAA30367"/>
    <property type="gene ID" value="BAA30367"/>
</dbReference>
<dbReference type="GeneID" id="1443590"/>
<dbReference type="KEGG" id="pho:PHS035"/>
<dbReference type="eggNOG" id="arCOG04168">
    <property type="taxonomic scope" value="Archaea"/>
</dbReference>
<dbReference type="OrthoDB" id="43096at2157"/>
<dbReference type="Proteomes" id="UP000000752">
    <property type="component" value="Chromosome"/>
</dbReference>
<dbReference type="GO" id="GO:1990904">
    <property type="term" value="C:ribonucleoprotein complex"/>
    <property type="evidence" value="ECO:0007669"/>
    <property type="project" value="UniProtKB-KW"/>
</dbReference>
<dbReference type="GO" id="GO:0005840">
    <property type="term" value="C:ribosome"/>
    <property type="evidence" value="ECO:0007669"/>
    <property type="project" value="UniProtKB-KW"/>
</dbReference>
<dbReference type="GO" id="GO:0003735">
    <property type="term" value="F:structural constituent of ribosome"/>
    <property type="evidence" value="ECO:0007669"/>
    <property type="project" value="InterPro"/>
</dbReference>
<dbReference type="GO" id="GO:0006412">
    <property type="term" value="P:translation"/>
    <property type="evidence" value="ECO:0007669"/>
    <property type="project" value="UniProtKB-UniRule"/>
</dbReference>
<dbReference type="Gene3D" id="6.20.340.10">
    <property type="match status" value="1"/>
</dbReference>
<dbReference type="HAMAP" id="MF_00349">
    <property type="entry name" value="Ribosomal_eL34"/>
    <property type="match status" value="1"/>
</dbReference>
<dbReference type="InterPro" id="IPR008195">
    <property type="entry name" value="Ribosomal_eL34"/>
</dbReference>
<dbReference type="InterPro" id="IPR038562">
    <property type="entry name" value="Ribosomal_eL34_C_sf"/>
</dbReference>
<dbReference type="InterPro" id="IPR018065">
    <property type="entry name" value="Ribosomal_eL34_CS"/>
</dbReference>
<dbReference type="InterPro" id="IPR047868">
    <property type="entry name" value="Ribosomal_L34e_arc-type"/>
</dbReference>
<dbReference type="NCBIfam" id="NF003143">
    <property type="entry name" value="PRK04059.1"/>
    <property type="match status" value="1"/>
</dbReference>
<dbReference type="PANTHER" id="PTHR10759">
    <property type="entry name" value="60S RIBOSOMAL PROTEIN L34"/>
    <property type="match status" value="1"/>
</dbReference>
<dbReference type="Pfam" id="PF01199">
    <property type="entry name" value="Ribosomal_L34e"/>
    <property type="match status" value="1"/>
</dbReference>
<dbReference type="PRINTS" id="PR01250">
    <property type="entry name" value="RIBOSOMALL34"/>
</dbReference>
<dbReference type="PROSITE" id="PS01145">
    <property type="entry name" value="RIBOSOMAL_L34E"/>
    <property type="match status" value="1"/>
</dbReference>
<reference key="1">
    <citation type="journal article" date="1998" name="DNA Res.">
        <title>Complete sequence and gene organization of the genome of a hyper-thermophilic archaebacterium, Pyrococcus horikoshii OT3.</title>
        <authorList>
            <person name="Kawarabayasi Y."/>
            <person name="Sawada M."/>
            <person name="Horikawa H."/>
            <person name="Haikawa Y."/>
            <person name="Hino Y."/>
            <person name="Yamamoto S."/>
            <person name="Sekine M."/>
            <person name="Baba S."/>
            <person name="Kosugi H."/>
            <person name="Hosoyama A."/>
            <person name="Nagai Y."/>
            <person name="Sakai M."/>
            <person name="Ogura K."/>
            <person name="Otsuka R."/>
            <person name="Nakazawa H."/>
            <person name="Takamiya M."/>
            <person name="Ohfuku Y."/>
            <person name="Funahashi T."/>
            <person name="Tanaka T."/>
            <person name="Kudoh Y."/>
            <person name="Yamazaki J."/>
            <person name="Kushida N."/>
            <person name="Oguchi A."/>
            <person name="Aoki K."/>
            <person name="Yoshizawa T."/>
            <person name="Nakamura Y."/>
            <person name="Robb F.T."/>
            <person name="Horikoshi K."/>
            <person name="Masuchi Y."/>
            <person name="Shizuya H."/>
            <person name="Kikuchi H."/>
        </authorList>
    </citation>
    <scope>NUCLEOTIDE SEQUENCE [LARGE SCALE GENOMIC DNA]</scope>
    <source>
        <strain>ATCC 700860 / DSM 12428 / JCM 9974 / NBRC 100139 / OT-3</strain>
    </source>
</reference>
<gene>
    <name type="primary">rpl34e</name>
    <name type="ordered locus">PH1264.1</name>
    <name type="ORF">PHS035</name>
</gene>
<comment type="similarity">
    <text evidence="2">Belongs to the eukaryotic ribosomal protein eL34 family.</text>
</comment>
<comment type="sequence caution" evidence="2">
    <conflict type="erroneous initiation">
        <sequence resource="EMBL-CDS" id="BAA30367"/>
    </conflict>
</comment>
<protein>
    <recommendedName>
        <fullName evidence="2">Large ribosomal subunit protein eL34</fullName>
    </recommendedName>
    <alternativeName>
        <fullName>50S ribosomal protein L34e</fullName>
    </alternativeName>
</protein>